<sequence>MSAAKENPCRKFQANIFNKSKCQNCFKPRESHLLNDEDLTQAKPIYGGWLLLAPDGTDFDNPVHRSRKWQRRFFILYEHGLLRYALDEMPTTLPQGTINMNQCTDVVDGEARTGQKFSLCILTPDKEHFIRAETKEIISGWLEMLMVYPRTNKQNQKKKRKVEPPTPQEPGPAKMAVTSSSGGSSGSSSSIPSAEKVPTTKSTLWQEEMRAKDQPDGTSLSPAQSPSQSQPPAACTPREPGLESKEDESTISGDRVDGGRKVRVESGYFSLEKAKQDLRAEEQLPPLLSPPSPSTPHSRRSQVIEKFEALDIEKAEHMETNMLILTTPSSDTRQGRSERRAIPRKRDFASEAPTAPLSDACPLSPHRRAKSLDRRSTESSMTPDLLNFKKGWLTKQYEDGQWKKHWFVLADQSLRYYRDSVAEEAADLDGEINLSTCYDVTEYPVQRNYGFQIHTKEGEFTLSAMTSGIRRNWIQTIMKHVLPASAPDVTSSLPEGKNKSTSFETCSRSTEKQEAEPGEPDPEQKKSRARERRREGRSKTFDWAEFRPIQQALAQERASAVGSSDSGDPGCLEAEPGELERERARRREERRKRFGMLDTIDGPGMEDTALRMDIDRSPGLLGTPDLKTQNVHVEIEQRWHQVETTPLREEKQVPIAPLHLSLEDRSERLSTHELTSLLEKELEQSQKEASDLLEQNRLLQDQLRVALGREQSAREGYVLQATCERGFAAMEETHQKKIEDLQRQHQRELEKLREEKDRLLAEETAATISAIEAMKNAHREEMERELEKSQRSQISSINSDIEALRRQYLEELQSVQRELEVLSEQYSQKCLENAHLAQALEAERQALRQCQRENQELNAHNQELNNRLAAEITRLRTLLTGDGGGESTGLPLTQGKDAYELEVLLRVKESEIQYLKQEISSLKDELQTALRDKKYASDKYKDIYTELSIAKAKADCDISRLKEQLKAATEALGEKSPEGTTVSGYDIMKSKSNPDFLKKDRSCVTRQLRNIRSKSVIEQVSWDN</sequence>
<gene>
    <name type="primary">Mprip</name>
    <name type="synonym">Kiaa0864</name>
    <name type="synonym">Mrip</name>
    <name type="synonym">Rhoip3</name>
</gene>
<organism>
    <name type="scientific">Mus musculus</name>
    <name type="common">Mouse</name>
    <dbReference type="NCBI Taxonomy" id="10090"/>
    <lineage>
        <taxon>Eukaryota</taxon>
        <taxon>Metazoa</taxon>
        <taxon>Chordata</taxon>
        <taxon>Craniata</taxon>
        <taxon>Vertebrata</taxon>
        <taxon>Euteleostomi</taxon>
        <taxon>Mammalia</taxon>
        <taxon>Eutheria</taxon>
        <taxon>Euarchontoglires</taxon>
        <taxon>Glires</taxon>
        <taxon>Rodentia</taxon>
        <taxon>Myomorpha</taxon>
        <taxon>Muroidea</taxon>
        <taxon>Muridae</taxon>
        <taxon>Murinae</taxon>
        <taxon>Mus</taxon>
        <taxon>Mus</taxon>
    </lineage>
</organism>
<comment type="function">
    <text evidence="6 7">Targets myosin phosphatase to the actin cytoskeleton. Required for the regulation of the actin cytoskeleton by RhoA and ROCK1. Depletion leads to an increased number of stress fibers in smooth muscle cells through stabilization of actin fibers by phosphorylated myosin. Overexpression of MRIP as well as its F-actin-binding region leads to disassembly of stress fibers in neuronal cells.</text>
</comment>
<comment type="subunit">
    <text evidence="6 7 8 9">Binds RHOA, PPP1R12A/MBS and PPP1R12C/MBS85 through adjacent coiled coil domains. Interacts with MYZAP. Binds F-actin through its N-terminus.</text>
</comment>
<comment type="subcellular location">
    <subcellularLocation>
        <location evidence="6">Cytoplasm</location>
        <location evidence="6">Cytoskeleton</location>
    </subcellularLocation>
    <text>Colocalizes with F-actin.</text>
</comment>
<comment type="alternative products">
    <event type="alternative splicing"/>
    <isoform>
        <id>P97434-1</id>
        <name>1</name>
        <sequence type="displayed"/>
    </isoform>
    <isoform>
        <id>P97434-2</id>
        <name>2</name>
        <sequence type="described" ref="VSP_017293"/>
    </isoform>
    <isoform>
        <id>P97434-3</id>
        <name>3</name>
        <sequence type="described" ref="VSP_017292 VSP_017293"/>
    </isoform>
    <isoform>
        <id>P97434-4</id>
        <name>4</name>
        <sequence type="described" ref="VSP_017290"/>
    </isoform>
    <isoform>
        <id>P97434-5</id>
        <name>5</name>
        <sequence type="described" ref="VSP_017291"/>
    </isoform>
</comment>
<comment type="tissue specificity">
    <text evidence="9">Expressed in Kidney, Brain, Heart and Lung.</text>
</comment>
<comment type="sequence caution" evidence="12">
    <conflict type="erroneous initiation">
        <sequence resource="EMBL-CDS" id="BAE36957"/>
    </conflict>
</comment>
<proteinExistence type="evidence at protein level"/>
<evidence type="ECO:0000250" key="1"/>
<evidence type="ECO:0000250" key="2">
    <source>
        <dbReference type="UniProtKB" id="Q6WCQ1"/>
    </source>
</evidence>
<evidence type="ECO:0000255" key="3"/>
<evidence type="ECO:0000255" key="4">
    <source>
        <dbReference type="PROSITE-ProRule" id="PRU00145"/>
    </source>
</evidence>
<evidence type="ECO:0000256" key="5">
    <source>
        <dbReference type="SAM" id="MobiDB-lite"/>
    </source>
</evidence>
<evidence type="ECO:0000269" key="6">
    <source>
    </source>
</evidence>
<evidence type="ECO:0000269" key="7">
    <source>
    </source>
</evidence>
<evidence type="ECO:0000269" key="8">
    <source>
    </source>
</evidence>
<evidence type="ECO:0000269" key="9">
    <source>
    </source>
</evidence>
<evidence type="ECO:0000303" key="10">
    <source>
    </source>
</evidence>
<evidence type="ECO:0000303" key="11">
    <source>
    </source>
</evidence>
<evidence type="ECO:0000305" key="12"/>
<evidence type="ECO:0007744" key="13">
    <source>
    </source>
</evidence>
<accession>P97434</accession>
<accession>Q3TBR5</accession>
<accession>Q3TC85</accession>
<accession>Q3TRS0</accession>
<accession>Q3U1Y8</accession>
<accession>Q3U3E4</accession>
<accession>Q5SWZ3</accession>
<accession>Q5SWZ4</accession>
<accession>Q5SWZ7</accession>
<accession>Q6P559</accession>
<accession>Q80YC8</accession>
<feature type="chain" id="PRO_0000223870" description="Myosin phosphatase Rho-interacting protein">
    <location>
        <begin position="1"/>
        <end position="1024"/>
    </location>
</feature>
<feature type="domain" description="PH 1" evidence="4">
    <location>
        <begin position="43"/>
        <end position="150"/>
    </location>
</feature>
<feature type="domain" description="PH 2" evidence="4">
    <location>
        <begin position="386"/>
        <end position="482"/>
    </location>
</feature>
<feature type="region of interest" description="Interaction with F-actin">
    <location>
        <begin position="1"/>
        <end position="382"/>
    </location>
</feature>
<feature type="region of interest" description="Disordered" evidence="5">
    <location>
        <begin position="152"/>
        <end position="262"/>
    </location>
</feature>
<feature type="region of interest" description="Disordered" evidence="5">
    <location>
        <begin position="274"/>
        <end position="301"/>
    </location>
</feature>
<feature type="region of interest" description="Disordered" evidence="5">
    <location>
        <begin position="328"/>
        <end position="379"/>
    </location>
</feature>
<feature type="region of interest" description="Disordered" evidence="5">
    <location>
        <begin position="486"/>
        <end position="583"/>
    </location>
</feature>
<feature type="region of interest" description="Interaction with RHOA" evidence="9">
    <location>
        <begin position="545"/>
        <end position="823"/>
    </location>
</feature>
<feature type="region of interest" description="Interaction with PPP1R12A" evidence="1">
    <location>
        <begin position="823"/>
        <end position="878"/>
    </location>
</feature>
<feature type="region of interest" description="Disordered" evidence="5">
    <location>
        <begin position="972"/>
        <end position="995"/>
    </location>
</feature>
<feature type="coiled-coil region" evidence="3">
    <location>
        <begin position="672"/>
        <end position="976"/>
    </location>
</feature>
<feature type="compositionally biased region" description="Low complexity" evidence="5">
    <location>
        <begin position="179"/>
        <end position="190"/>
    </location>
</feature>
<feature type="compositionally biased region" description="Low complexity" evidence="5">
    <location>
        <begin position="221"/>
        <end position="233"/>
    </location>
</feature>
<feature type="compositionally biased region" description="Basic and acidic residues" evidence="5">
    <location>
        <begin position="240"/>
        <end position="262"/>
    </location>
</feature>
<feature type="compositionally biased region" description="Basic and acidic residues" evidence="5">
    <location>
        <begin position="333"/>
        <end position="349"/>
    </location>
</feature>
<feature type="compositionally biased region" description="Polar residues" evidence="5">
    <location>
        <begin position="488"/>
        <end position="508"/>
    </location>
</feature>
<feature type="compositionally biased region" description="Basic and acidic residues" evidence="5">
    <location>
        <begin position="522"/>
        <end position="545"/>
    </location>
</feature>
<feature type="modified residue" description="Phosphoserine" evidence="2">
    <location>
        <position position="193"/>
    </location>
</feature>
<feature type="modified residue" description="Phosphoserine" evidence="13">
    <location>
        <position position="219"/>
    </location>
</feature>
<feature type="modified residue" description="Phosphoserine" evidence="13">
    <location>
        <position position="221"/>
    </location>
</feature>
<feature type="modified residue" description="Phosphoserine" evidence="13">
    <location>
        <position position="225"/>
    </location>
</feature>
<feature type="modified residue" description="Phosphoserine" evidence="13">
    <location>
        <position position="227"/>
    </location>
</feature>
<feature type="modified residue" description="Phosphoserine" evidence="2">
    <location>
        <position position="266"/>
    </location>
</feature>
<feature type="modified residue" description="Phosphoserine" evidence="2">
    <location>
        <position position="270"/>
    </location>
</feature>
<feature type="modified residue" description="Phosphoserine" evidence="13">
    <location>
        <position position="289"/>
    </location>
</feature>
<feature type="modified residue" description="Phosphoserine" evidence="2">
    <location>
        <position position="292"/>
    </location>
</feature>
<feature type="modified residue" description="Phosphothreonine" evidence="2">
    <location>
        <position position="295"/>
    </location>
</feature>
<feature type="modified residue" description="Phosphoserine" evidence="13">
    <location>
        <position position="364"/>
    </location>
</feature>
<feature type="modified residue" description="Phosphoserine" evidence="2">
    <location>
        <position position="492"/>
    </location>
</feature>
<feature type="modified residue" description="Phosphoserine" evidence="13">
    <location>
        <position position="617"/>
    </location>
</feature>
<feature type="modified residue" description="Phosphothreonine" evidence="2">
    <location>
        <position position="645"/>
    </location>
</feature>
<feature type="modified residue" description="Phosphoserine" evidence="2">
    <location>
        <position position="799"/>
    </location>
</feature>
<feature type="modified residue" description="Phosphoserine" evidence="13">
    <location>
        <position position="976"/>
    </location>
</feature>
<feature type="modified residue" description="Phosphoserine" evidence="2">
    <location>
        <position position="992"/>
    </location>
</feature>
<feature type="modified residue" description="Phosphoserine" evidence="13">
    <location>
        <position position="1013"/>
    </location>
</feature>
<feature type="modified residue" description="Phosphoserine" evidence="13">
    <location>
        <position position="1015"/>
    </location>
</feature>
<feature type="splice variant" id="VSP_017290" description="In isoform 4." evidence="10">
    <location>
        <begin position="168"/>
        <end position="205"/>
    </location>
</feature>
<feature type="splice variant" id="VSP_017292" description="In isoform 3." evidence="12">
    <location>
        <begin position="347"/>
        <end position="382"/>
    </location>
</feature>
<feature type="splice variant" id="VSP_017291" description="In isoform 5." evidence="11">
    <original>WKKHWFVL</original>
    <variation>TQVPFLRTKIGTF</variation>
    <location>
        <begin position="402"/>
        <end position="409"/>
    </location>
</feature>
<feature type="splice variant" id="VSP_017293" description="In isoform 2 and isoform 3." evidence="10 11">
    <original>VIEQVSWDN</original>
    <variation>LKEGLTVQERLKLFESRDLKKD</variation>
    <location>
        <begin position="1016"/>
        <end position="1024"/>
    </location>
</feature>
<feature type="mutagenesis site" description="Loss of interaction with PPP1R12C and PPP1R12A." evidence="7">
    <original>L</original>
    <variation>P</variation>
    <location>
        <position position="857"/>
    </location>
</feature>
<feature type="mutagenesis site" description="No effect." evidence="7">
    <original>L</original>
    <variation>P</variation>
    <location>
        <position position="905"/>
    </location>
</feature>
<feature type="mutagenesis site" description="Loss of interaction with PPP1R12C and PPP1R12A." evidence="7">
    <original>I</original>
    <variation>P</variation>
    <location>
        <position position="919"/>
    </location>
</feature>
<feature type="sequence conflict" description="In Ref. 2; BAE32843." evidence="12" ref="2">
    <original>K</original>
    <variation>E</variation>
    <location>
        <position position="43"/>
    </location>
</feature>
<feature type="sequence conflict" description="In Ref. 2; BAE33355." evidence="12" ref="2">
    <original>Q</original>
    <variation>R</variation>
    <location>
        <position position="70"/>
    </location>
</feature>
<feature type="sequence conflict" description="In Ref. 1; AAB18198." evidence="12" ref="1">
    <original>S</original>
    <variation>T</variation>
    <location>
        <position position="184"/>
    </location>
</feature>
<feature type="sequence conflict" description="In Ref. 2; BAE42242." evidence="12" ref="2">
    <original>S</original>
    <variation>P</variation>
    <location>
        <position position="289"/>
    </location>
</feature>
<feature type="sequence conflict" description="In Ref. 2; BAE32843." evidence="12" ref="2">
    <original>S</original>
    <variation>P</variation>
    <location>
        <position position="301"/>
    </location>
</feature>
<feature type="sequence conflict" description="In Ref. 2; BAE42242/BAE42072." evidence="12" ref="2">
    <original>A</original>
    <variation>T</variation>
    <location>
        <position position="484"/>
    </location>
</feature>
<feature type="sequence conflict" description="In Ref. 1; AAB18198." evidence="12" ref="1">
    <original>R</original>
    <variation>P</variation>
    <location>
        <position position="590"/>
    </location>
</feature>
<feature type="modified residue" description="Phosphoserine" evidence="13">
    <location sequence="P97434-2">
        <position position="1015"/>
    </location>
</feature>
<feature type="modified residue" description="Phosphoserine" evidence="13">
    <location sequence="P97434-3">
        <position position="979"/>
    </location>
</feature>
<dbReference type="EMBL" id="U73200">
    <property type="protein sequence ID" value="AAB18198.1"/>
    <property type="molecule type" value="mRNA"/>
</dbReference>
<dbReference type="EMBL" id="AK154807">
    <property type="protein sequence ID" value="BAE32843.1"/>
    <property type="molecule type" value="mRNA"/>
</dbReference>
<dbReference type="EMBL" id="AK155630">
    <property type="protein sequence ID" value="BAE33355.1"/>
    <property type="molecule type" value="mRNA"/>
</dbReference>
<dbReference type="EMBL" id="AK158296">
    <property type="protein sequence ID" value="BAE34450.1"/>
    <property type="molecule type" value="mRNA"/>
</dbReference>
<dbReference type="EMBL" id="AK162530">
    <property type="protein sequence ID" value="BAE36957.1"/>
    <property type="status" value="ALT_INIT"/>
    <property type="molecule type" value="mRNA"/>
</dbReference>
<dbReference type="EMBL" id="AK170849">
    <property type="protein sequence ID" value="BAE42072.1"/>
    <property type="molecule type" value="mRNA"/>
</dbReference>
<dbReference type="EMBL" id="AK171089">
    <property type="protein sequence ID" value="BAE42242.1"/>
    <property type="molecule type" value="mRNA"/>
</dbReference>
<dbReference type="EMBL" id="AL596204">
    <property type="status" value="NOT_ANNOTATED_CDS"/>
    <property type="molecule type" value="Genomic_DNA"/>
</dbReference>
<dbReference type="EMBL" id="BC049803">
    <property type="protein sequence ID" value="AAH49803.1"/>
    <property type="molecule type" value="mRNA"/>
</dbReference>
<dbReference type="EMBL" id="BC063067">
    <property type="protein sequence ID" value="AAH63067.1"/>
    <property type="molecule type" value="mRNA"/>
</dbReference>
<dbReference type="CCDS" id="CCDS24774.1">
    <molecule id="P97434-2"/>
</dbReference>
<dbReference type="CCDS" id="CCDS24775.1">
    <molecule id="P97434-1"/>
</dbReference>
<dbReference type="PIR" id="T30868">
    <property type="entry name" value="T30868"/>
</dbReference>
<dbReference type="RefSeq" id="NP_036157.2">
    <molecule id="P97434-1"/>
    <property type="nucleotide sequence ID" value="NM_012027.2"/>
</dbReference>
<dbReference type="RefSeq" id="NP_957697.1">
    <molecule id="P97434-2"/>
    <property type="nucleotide sequence ID" value="NM_201245.3"/>
</dbReference>
<dbReference type="RefSeq" id="XP_006533503.1">
    <molecule id="P97434-3"/>
    <property type="nucleotide sequence ID" value="XM_006533440.3"/>
</dbReference>
<dbReference type="SMR" id="P97434"/>
<dbReference type="BioGRID" id="205073">
    <property type="interactions" value="14"/>
</dbReference>
<dbReference type="FunCoup" id="P97434">
    <property type="interactions" value="1093"/>
</dbReference>
<dbReference type="IntAct" id="P97434">
    <property type="interactions" value="12"/>
</dbReference>
<dbReference type="MINT" id="P97434"/>
<dbReference type="STRING" id="10090.ENSMUSP00000071914"/>
<dbReference type="GlyGen" id="P97434">
    <property type="glycosylation" value="2 sites, 1 O-linked glycan (1 site)"/>
</dbReference>
<dbReference type="iPTMnet" id="P97434"/>
<dbReference type="PhosphoSitePlus" id="P97434"/>
<dbReference type="SwissPalm" id="P97434"/>
<dbReference type="jPOST" id="P97434"/>
<dbReference type="PaxDb" id="10090-ENSMUSP00000112072"/>
<dbReference type="PeptideAtlas" id="P97434"/>
<dbReference type="ProteomicsDB" id="291497">
    <molecule id="P97434-1"/>
</dbReference>
<dbReference type="ProteomicsDB" id="291498">
    <molecule id="P97434-2"/>
</dbReference>
<dbReference type="ProteomicsDB" id="291499">
    <molecule id="P97434-3"/>
</dbReference>
<dbReference type="ProteomicsDB" id="291500">
    <molecule id="P97434-4"/>
</dbReference>
<dbReference type="ProteomicsDB" id="291501">
    <molecule id="P97434-5"/>
</dbReference>
<dbReference type="Pumba" id="P97434"/>
<dbReference type="Antibodypedia" id="13293">
    <property type="antibodies" value="204 antibodies from 31 providers"/>
</dbReference>
<dbReference type="DNASU" id="26936"/>
<dbReference type="Ensembl" id="ENSMUST00000072031.13">
    <molecule id="P97434-2"/>
    <property type="protein sequence ID" value="ENSMUSP00000071914.7"/>
    <property type="gene ID" value="ENSMUSG00000005417.18"/>
</dbReference>
<dbReference type="Ensembl" id="ENSMUST00000108751.8">
    <molecule id="P97434-4"/>
    <property type="protein sequence ID" value="ENSMUSP00000104382.2"/>
    <property type="gene ID" value="ENSMUSG00000005417.18"/>
</dbReference>
<dbReference type="Ensembl" id="ENSMUST00000116371.8">
    <molecule id="P97434-1"/>
    <property type="protein sequence ID" value="ENSMUSP00000112072.2"/>
    <property type="gene ID" value="ENSMUSG00000005417.18"/>
</dbReference>
<dbReference type="GeneID" id="26936"/>
<dbReference type="KEGG" id="mmu:26936"/>
<dbReference type="UCSC" id="uc007jen.2">
    <molecule id="P97434-1"/>
    <property type="organism name" value="mouse"/>
</dbReference>
<dbReference type="UCSC" id="uc007jeo.2">
    <molecule id="P97434-2"/>
    <property type="organism name" value="mouse"/>
</dbReference>
<dbReference type="UCSC" id="uc007jep.2">
    <molecule id="P97434-4"/>
    <property type="organism name" value="mouse"/>
</dbReference>
<dbReference type="UCSC" id="uc011xvo.1">
    <molecule id="P97434-5"/>
    <property type="organism name" value="mouse"/>
</dbReference>
<dbReference type="AGR" id="MGI:1349438"/>
<dbReference type="CTD" id="23164"/>
<dbReference type="MGI" id="MGI:1349438">
    <property type="gene designation" value="Mprip"/>
</dbReference>
<dbReference type="VEuPathDB" id="HostDB:ENSMUSG00000005417"/>
<dbReference type="eggNOG" id="KOG4807">
    <property type="taxonomic scope" value="Eukaryota"/>
</dbReference>
<dbReference type="GeneTree" id="ENSGT00940000155286"/>
<dbReference type="HOGENOM" id="CLU_011327_0_0_1"/>
<dbReference type="InParanoid" id="P97434"/>
<dbReference type="TreeFam" id="TF329258"/>
<dbReference type="BioGRID-ORCS" id="26936">
    <property type="hits" value="5 hits in 77 CRISPR screens"/>
</dbReference>
<dbReference type="CD-CODE" id="CE726F99">
    <property type="entry name" value="Postsynaptic density"/>
</dbReference>
<dbReference type="ChiTaRS" id="Mprip">
    <property type="organism name" value="mouse"/>
</dbReference>
<dbReference type="PRO" id="PR:P97434"/>
<dbReference type="Proteomes" id="UP000000589">
    <property type="component" value="Chromosome 11"/>
</dbReference>
<dbReference type="RNAct" id="P97434">
    <property type="molecule type" value="protein"/>
</dbReference>
<dbReference type="Bgee" id="ENSMUSG00000005417">
    <property type="expression patterns" value="Expressed in spermatid and 265 other cell types or tissues"/>
</dbReference>
<dbReference type="ExpressionAtlas" id="P97434">
    <property type="expression patterns" value="baseline and differential"/>
</dbReference>
<dbReference type="GO" id="GO:0005737">
    <property type="term" value="C:cytoplasm"/>
    <property type="evidence" value="ECO:0007669"/>
    <property type="project" value="UniProtKB-KW"/>
</dbReference>
<dbReference type="GO" id="GO:0005856">
    <property type="term" value="C:cytoskeleton"/>
    <property type="evidence" value="ECO:0007669"/>
    <property type="project" value="UniProtKB-SubCell"/>
</dbReference>
<dbReference type="GO" id="GO:0003779">
    <property type="term" value="F:actin binding"/>
    <property type="evidence" value="ECO:0007669"/>
    <property type="project" value="UniProtKB-KW"/>
</dbReference>
<dbReference type="CDD" id="cd13275">
    <property type="entry name" value="PH_M-RIP"/>
    <property type="match status" value="1"/>
</dbReference>
<dbReference type="CDD" id="cd01236">
    <property type="entry name" value="PH_RIP"/>
    <property type="match status" value="1"/>
</dbReference>
<dbReference type="FunFam" id="2.30.29.30:FF:000133">
    <property type="entry name" value="myosin phosphatase Rho-interacting protein isoform X1"/>
    <property type="match status" value="1"/>
</dbReference>
<dbReference type="FunFam" id="2.30.29.30:FF:000190">
    <property type="entry name" value="myosin phosphatase Rho-interacting protein isoform X2"/>
    <property type="match status" value="1"/>
</dbReference>
<dbReference type="Gene3D" id="2.30.29.30">
    <property type="entry name" value="Pleckstrin-homology domain (PH domain)/Phosphotyrosine-binding domain (PTB)"/>
    <property type="match status" value="2"/>
</dbReference>
<dbReference type="InterPro" id="IPR052223">
    <property type="entry name" value="Actin_Cytoskeleton_Reg"/>
</dbReference>
<dbReference type="InterPro" id="IPR039597">
    <property type="entry name" value="M-RIP_PH"/>
</dbReference>
<dbReference type="InterPro" id="IPR011993">
    <property type="entry name" value="PH-like_dom_sf"/>
</dbReference>
<dbReference type="InterPro" id="IPR001849">
    <property type="entry name" value="PH_domain"/>
</dbReference>
<dbReference type="PANTHER" id="PTHR17271:SF9">
    <property type="entry name" value="MYOSIN PHOSPHATASE RHO-INTERACTING PROTEIN"/>
    <property type="match status" value="1"/>
</dbReference>
<dbReference type="PANTHER" id="PTHR17271">
    <property type="entry name" value="PLECKSTRIN HOMOLOGY PH DOMAIN-CONTAINING PROTEIN"/>
    <property type="match status" value="1"/>
</dbReference>
<dbReference type="Pfam" id="PF00169">
    <property type="entry name" value="PH"/>
    <property type="match status" value="2"/>
</dbReference>
<dbReference type="SMART" id="SM00233">
    <property type="entry name" value="PH"/>
    <property type="match status" value="2"/>
</dbReference>
<dbReference type="SUPFAM" id="SSF50729">
    <property type="entry name" value="PH domain-like"/>
    <property type="match status" value="2"/>
</dbReference>
<dbReference type="PROSITE" id="PS50003">
    <property type="entry name" value="PH_DOMAIN"/>
    <property type="match status" value="2"/>
</dbReference>
<protein>
    <recommendedName>
        <fullName>Myosin phosphatase Rho-interacting protein</fullName>
    </recommendedName>
    <alternativeName>
        <fullName>Rho-interacting protein 3</fullName>
        <shortName>RIP3</shortName>
    </alternativeName>
    <alternativeName>
        <fullName>p116Rip</fullName>
    </alternativeName>
</protein>
<keyword id="KW-0009">Actin-binding</keyword>
<keyword id="KW-0025">Alternative splicing</keyword>
<keyword id="KW-0175">Coiled coil</keyword>
<keyword id="KW-0963">Cytoplasm</keyword>
<keyword id="KW-0206">Cytoskeleton</keyword>
<keyword id="KW-0597">Phosphoprotein</keyword>
<keyword id="KW-1185">Reference proteome</keyword>
<keyword id="KW-0677">Repeat</keyword>
<name>MPRIP_MOUSE</name>
<reference key="1">
    <citation type="journal article" date="1997" name="J. Cell Biol.">
        <title>Identification of a novel, putative Rho-specific GDP/GTP exchange factor and a RhoA-binding protein: control of neuronal morphology.</title>
        <authorList>
            <person name="Gebbink M.F.B.G."/>
            <person name="Kranenburg O."/>
            <person name="Poland M."/>
            <person name="van Horck F.P.G."/>
            <person name="Houssa B."/>
            <person name="Moolenaar W.H."/>
        </authorList>
    </citation>
    <scope>NUCLEOTIDE SEQUENCE [MRNA] (ISOFORM 1)</scope>
    <scope>TISSUE SPECIFICITY</scope>
    <scope>INTERACTION WITH RHOA</scope>
    <source>
        <tissue>Brain</tissue>
    </source>
</reference>
<reference key="2">
    <citation type="journal article" date="2005" name="Science">
        <title>The transcriptional landscape of the mammalian genome.</title>
        <authorList>
            <person name="Carninci P."/>
            <person name="Kasukawa T."/>
            <person name="Katayama S."/>
            <person name="Gough J."/>
            <person name="Frith M.C."/>
            <person name="Maeda N."/>
            <person name="Oyama R."/>
            <person name="Ravasi T."/>
            <person name="Lenhard B."/>
            <person name="Wells C."/>
            <person name="Kodzius R."/>
            <person name="Shimokawa K."/>
            <person name="Bajic V.B."/>
            <person name="Brenner S.E."/>
            <person name="Batalov S."/>
            <person name="Forrest A.R."/>
            <person name="Zavolan M."/>
            <person name="Davis M.J."/>
            <person name="Wilming L.G."/>
            <person name="Aidinis V."/>
            <person name="Allen J.E."/>
            <person name="Ambesi-Impiombato A."/>
            <person name="Apweiler R."/>
            <person name="Aturaliya R.N."/>
            <person name="Bailey T.L."/>
            <person name="Bansal M."/>
            <person name="Baxter L."/>
            <person name="Beisel K.W."/>
            <person name="Bersano T."/>
            <person name="Bono H."/>
            <person name="Chalk A.M."/>
            <person name="Chiu K.P."/>
            <person name="Choudhary V."/>
            <person name="Christoffels A."/>
            <person name="Clutterbuck D.R."/>
            <person name="Crowe M.L."/>
            <person name="Dalla E."/>
            <person name="Dalrymple B.P."/>
            <person name="de Bono B."/>
            <person name="Della Gatta G."/>
            <person name="di Bernardo D."/>
            <person name="Down T."/>
            <person name="Engstrom P."/>
            <person name="Fagiolini M."/>
            <person name="Faulkner G."/>
            <person name="Fletcher C.F."/>
            <person name="Fukushima T."/>
            <person name="Furuno M."/>
            <person name="Futaki S."/>
            <person name="Gariboldi M."/>
            <person name="Georgii-Hemming P."/>
            <person name="Gingeras T.R."/>
            <person name="Gojobori T."/>
            <person name="Green R.E."/>
            <person name="Gustincich S."/>
            <person name="Harbers M."/>
            <person name="Hayashi Y."/>
            <person name="Hensch T.K."/>
            <person name="Hirokawa N."/>
            <person name="Hill D."/>
            <person name="Huminiecki L."/>
            <person name="Iacono M."/>
            <person name="Ikeo K."/>
            <person name="Iwama A."/>
            <person name="Ishikawa T."/>
            <person name="Jakt M."/>
            <person name="Kanapin A."/>
            <person name="Katoh M."/>
            <person name="Kawasawa Y."/>
            <person name="Kelso J."/>
            <person name="Kitamura H."/>
            <person name="Kitano H."/>
            <person name="Kollias G."/>
            <person name="Krishnan S.P."/>
            <person name="Kruger A."/>
            <person name="Kummerfeld S.K."/>
            <person name="Kurochkin I.V."/>
            <person name="Lareau L.F."/>
            <person name="Lazarevic D."/>
            <person name="Lipovich L."/>
            <person name="Liu J."/>
            <person name="Liuni S."/>
            <person name="McWilliam S."/>
            <person name="Madan Babu M."/>
            <person name="Madera M."/>
            <person name="Marchionni L."/>
            <person name="Matsuda H."/>
            <person name="Matsuzawa S."/>
            <person name="Miki H."/>
            <person name="Mignone F."/>
            <person name="Miyake S."/>
            <person name="Morris K."/>
            <person name="Mottagui-Tabar S."/>
            <person name="Mulder N."/>
            <person name="Nakano N."/>
            <person name="Nakauchi H."/>
            <person name="Ng P."/>
            <person name="Nilsson R."/>
            <person name="Nishiguchi S."/>
            <person name="Nishikawa S."/>
            <person name="Nori F."/>
            <person name="Ohara O."/>
            <person name="Okazaki Y."/>
            <person name="Orlando V."/>
            <person name="Pang K.C."/>
            <person name="Pavan W.J."/>
            <person name="Pavesi G."/>
            <person name="Pesole G."/>
            <person name="Petrovsky N."/>
            <person name="Piazza S."/>
            <person name="Reed J."/>
            <person name="Reid J.F."/>
            <person name="Ring B.Z."/>
            <person name="Ringwald M."/>
            <person name="Rost B."/>
            <person name="Ruan Y."/>
            <person name="Salzberg S.L."/>
            <person name="Sandelin A."/>
            <person name="Schneider C."/>
            <person name="Schoenbach C."/>
            <person name="Sekiguchi K."/>
            <person name="Semple C.A."/>
            <person name="Seno S."/>
            <person name="Sessa L."/>
            <person name="Sheng Y."/>
            <person name="Shibata Y."/>
            <person name="Shimada H."/>
            <person name="Shimada K."/>
            <person name="Silva D."/>
            <person name="Sinclair B."/>
            <person name="Sperling S."/>
            <person name="Stupka E."/>
            <person name="Sugiura K."/>
            <person name="Sultana R."/>
            <person name="Takenaka Y."/>
            <person name="Taki K."/>
            <person name="Tammoja K."/>
            <person name="Tan S.L."/>
            <person name="Tang S."/>
            <person name="Taylor M.S."/>
            <person name="Tegner J."/>
            <person name="Teichmann S.A."/>
            <person name="Ueda H.R."/>
            <person name="van Nimwegen E."/>
            <person name="Verardo R."/>
            <person name="Wei C.L."/>
            <person name="Yagi K."/>
            <person name="Yamanishi H."/>
            <person name="Zabarovsky E."/>
            <person name="Zhu S."/>
            <person name="Zimmer A."/>
            <person name="Hide W."/>
            <person name="Bult C."/>
            <person name="Grimmond S.M."/>
            <person name="Teasdale R.D."/>
            <person name="Liu E.T."/>
            <person name="Brusic V."/>
            <person name="Quackenbush J."/>
            <person name="Wahlestedt C."/>
            <person name="Mattick J.S."/>
            <person name="Hume D.A."/>
            <person name="Kai C."/>
            <person name="Sasaki D."/>
            <person name="Tomaru Y."/>
            <person name="Fukuda S."/>
            <person name="Kanamori-Katayama M."/>
            <person name="Suzuki M."/>
            <person name="Aoki J."/>
            <person name="Arakawa T."/>
            <person name="Iida J."/>
            <person name="Imamura K."/>
            <person name="Itoh M."/>
            <person name="Kato T."/>
            <person name="Kawaji H."/>
            <person name="Kawagashira N."/>
            <person name="Kawashima T."/>
            <person name="Kojima M."/>
            <person name="Kondo S."/>
            <person name="Konno H."/>
            <person name="Nakano K."/>
            <person name="Ninomiya N."/>
            <person name="Nishio T."/>
            <person name="Okada M."/>
            <person name="Plessy C."/>
            <person name="Shibata K."/>
            <person name="Shiraki T."/>
            <person name="Suzuki S."/>
            <person name="Tagami M."/>
            <person name="Waki K."/>
            <person name="Watahiki A."/>
            <person name="Okamura-Oho Y."/>
            <person name="Suzuki H."/>
            <person name="Kawai J."/>
            <person name="Hayashizaki Y."/>
        </authorList>
    </citation>
    <scope>NUCLEOTIDE SEQUENCE [LARGE SCALE MRNA] (ISOFORM 2)</scope>
    <scope>NUCLEOTIDE SEQUENCE [LARGE SCALE MRNA] OF 114-1024 (ISOFORM 5)</scope>
    <source>
        <strain>C57BL/6J</strain>
        <strain>NOD</strain>
        <tissue>Inner ear</tissue>
        <tissue>Urinary bladder</tissue>
    </source>
</reference>
<reference key="3">
    <citation type="journal article" date="2009" name="PLoS Biol.">
        <title>Lineage-specific biology revealed by a finished genome assembly of the mouse.</title>
        <authorList>
            <person name="Church D.M."/>
            <person name="Goodstadt L."/>
            <person name="Hillier L.W."/>
            <person name="Zody M.C."/>
            <person name="Goldstein S."/>
            <person name="She X."/>
            <person name="Bult C.J."/>
            <person name="Agarwala R."/>
            <person name="Cherry J.L."/>
            <person name="DiCuccio M."/>
            <person name="Hlavina W."/>
            <person name="Kapustin Y."/>
            <person name="Meric P."/>
            <person name="Maglott D."/>
            <person name="Birtle Z."/>
            <person name="Marques A.C."/>
            <person name="Graves T."/>
            <person name="Zhou S."/>
            <person name="Teague B."/>
            <person name="Potamousis K."/>
            <person name="Churas C."/>
            <person name="Place M."/>
            <person name="Herschleb J."/>
            <person name="Runnheim R."/>
            <person name="Forrest D."/>
            <person name="Amos-Landgraf J."/>
            <person name="Schwartz D.C."/>
            <person name="Cheng Z."/>
            <person name="Lindblad-Toh K."/>
            <person name="Eichler E.E."/>
            <person name="Ponting C.P."/>
        </authorList>
    </citation>
    <scope>NUCLEOTIDE SEQUENCE [LARGE SCALE GENOMIC DNA]</scope>
    <source>
        <strain>C57BL/6J</strain>
    </source>
</reference>
<reference key="4">
    <citation type="journal article" date="2004" name="Genome Res.">
        <title>The status, quality, and expansion of the NIH full-length cDNA project: the Mammalian Gene Collection (MGC).</title>
        <authorList>
            <consortium name="The MGC Project Team"/>
        </authorList>
    </citation>
    <scope>NUCLEOTIDE SEQUENCE [LARGE SCALE MRNA] (ISOFORM 2)</scope>
    <scope>NUCLEOTIDE SEQUENCE [LARGE SCALE MRNA] OF 11-1024 (ISOFORM 4)</scope>
    <source>
        <strain>C57BL/6J</strain>
        <tissue>Brain</tissue>
        <tissue>Embryo</tissue>
    </source>
</reference>
<reference key="5">
    <citation type="journal article" date="2003" name="J. Biol. Chem.">
        <title>p116Rip is a novel filamentous actin-binding protein.</title>
        <authorList>
            <person name="Mulder J."/>
            <person name="Poland M."/>
            <person name="Gebbink M.F.G.B."/>
            <person name="Calafat J."/>
            <person name="Moolenaar W.H."/>
            <person name="Kranenburg O."/>
        </authorList>
    </citation>
    <scope>FUNCTION</scope>
    <scope>SUBCELLULAR LOCATION</scope>
    <scope>INTERACTION WITH F-ACTIN</scope>
</reference>
<reference key="6">
    <citation type="journal article" date="2004" name="Mol. Biol. Cell">
        <title>p116Rip targets myosin phosphatase to the actin cytoskeleton and is essential for RhoA/ROCK-regulated neuritogenesis.</title>
        <authorList>
            <person name="Mulder J."/>
            <person name="Ariaens A."/>
            <person name="van den Boomen D."/>
            <person name="Moolenaar W.H."/>
        </authorList>
    </citation>
    <scope>FUNCTION</scope>
    <scope>INTERACTION WITH PPP1R12A AND PPP1R12C</scope>
    <scope>MUTAGENESIS OF LEU-857; LEU-905 AND ILE-919</scope>
</reference>
<reference key="7">
    <citation type="journal article" date="2006" name="Mol. Cell. Proteomics">
        <title>Comprehensive identification of phosphorylation sites in postsynaptic density preparations.</title>
        <authorList>
            <person name="Trinidad J.C."/>
            <person name="Specht C.G."/>
            <person name="Thalhammer A."/>
            <person name="Schoepfer R."/>
            <person name="Burlingame A.L."/>
        </authorList>
    </citation>
    <scope>IDENTIFICATION BY MASS SPECTROMETRY [LARGE SCALE ANALYSIS]</scope>
    <source>
        <tissue>Brain</tissue>
    </source>
</reference>
<reference key="8">
    <citation type="journal article" date="2007" name="Proc. Natl. Acad. Sci. U.S.A.">
        <title>Large-scale phosphorylation analysis of mouse liver.</title>
        <authorList>
            <person name="Villen J."/>
            <person name="Beausoleil S.A."/>
            <person name="Gerber S.A."/>
            <person name="Gygi S.P."/>
        </authorList>
    </citation>
    <scope>IDENTIFICATION BY MASS SPECTROMETRY [LARGE SCALE ANALYSIS]</scope>
    <source>
        <tissue>Liver</tissue>
    </source>
</reference>
<reference key="9">
    <citation type="journal article" date="2009" name="Immunity">
        <title>The phagosomal proteome in interferon-gamma-activated macrophages.</title>
        <authorList>
            <person name="Trost M."/>
            <person name="English L."/>
            <person name="Lemieux S."/>
            <person name="Courcelles M."/>
            <person name="Desjardins M."/>
            <person name="Thibault P."/>
        </authorList>
    </citation>
    <scope>IDENTIFICATION BY MASS SPECTROMETRY [LARGE SCALE ANALYSIS]</scope>
</reference>
<reference key="10">
    <citation type="journal article" date="2010" name="Cell">
        <title>A tissue-specific atlas of mouse protein phosphorylation and expression.</title>
        <authorList>
            <person name="Huttlin E.L."/>
            <person name="Jedrychowski M.P."/>
            <person name="Elias J.E."/>
            <person name="Goswami T."/>
            <person name="Rad R."/>
            <person name="Beausoleil S.A."/>
            <person name="Villen J."/>
            <person name="Haas W."/>
            <person name="Sowa M.E."/>
            <person name="Gygi S.P."/>
        </authorList>
    </citation>
    <scope>PHOSPHORYLATION [LARGE SCALE ANALYSIS] AT SER-219; SER-221; SER-225; SER-227; SER-289; SER-364; SER-617; SER-976; SER-1013 AND SER-1015</scope>
    <scope>PHOSPHORYLATION [LARGE SCALE ANALYSIS] AT SER-1015 (ISOFORM 2)</scope>
    <scope>PHOSPHORYLATION [LARGE SCALE ANALYSIS] AT SER-979 (ISOFORM 3)</scope>
    <scope>IDENTIFICATION BY MASS SPECTROMETRY [LARGE SCALE ANALYSIS]</scope>
    <source>
        <tissue>Brain</tissue>
        <tissue>Brown adipose tissue</tissue>
        <tissue>Heart</tissue>
        <tissue>Kidney</tissue>
        <tissue>Liver</tissue>
        <tissue>Lung</tissue>
        <tissue>Pancreas</tissue>
        <tissue>Spleen</tissue>
        <tissue>Testis</tissue>
    </source>
</reference>
<reference key="11">
    <citation type="journal article" date="2010" name="Circ. Res.">
        <title>Myozap, a novel intercalated disc protein, activates serum response factor-dependent signaling and is required to maintain cardiac function in vivo.</title>
        <authorList>
            <person name="Seeger T.S."/>
            <person name="Frank D."/>
            <person name="Rohr C."/>
            <person name="Will R."/>
            <person name="Just S."/>
            <person name="Grund C."/>
            <person name="Lyon R."/>
            <person name="Luedde M."/>
            <person name="Koegl M."/>
            <person name="Sheikh F."/>
            <person name="Rottbauer W."/>
            <person name="Franke W.W."/>
            <person name="Katus H.A."/>
            <person name="Olson E.N."/>
            <person name="Frey N."/>
        </authorList>
    </citation>
    <scope>INTERACTION WITH MYZAP</scope>
</reference>